<evidence type="ECO:0000255" key="1">
    <source>
        <dbReference type="HAMAP-Rule" id="MF_00250"/>
    </source>
</evidence>
<reference key="1">
    <citation type="journal article" date="2005" name="Genome Res.">
        <title>Living with two extremes: conclusions from the genome sequence of Natronomonas pharaonis.</title>
        <authorList>
            <person name="Falb M."/>
            <person name="Pfeiffer F."/>
            <person name="Palm P."/>
            <person name="Rodewald K."/>
            <person name="Hickmann V."/>
            <person name="Tittor J."/>
            <person name="Oesterhelt D."/>
        </authorList>
    </citation>
    <scope>NUCLEOTIDE SEQUENCE [LARGE SCALE GENOMIC DNA]</scope>
    <source>
        <strain>ATCC 35678 / DSM 2160 / CIP 103997 / JCM 8858 / NBRC 14720 / NCIMB 2260 / Gabara</strain>
    </source>
</reference>
<proteinExistence type="inferred from homology"/>
<comment type="function">
    <text evidence="1">DNA-dependent RNA polymerase (RNAP) catalyzes the transcription of DNA into RNA using the four ribonucleoside triphosphates as substrates.</text>
</comment>
<comment type="catalytic activity">
    <reaction evidence="1">
        <text>RNA(n) + a ribonucleoside 5'-triphosphate = RNA(n+1) + diphosphate</text>
        <dbReference type="Rhea" id="RHEA:21248"/>
        <dbReference type="Rhea" id="RHEA-COMP:14527"/>
        <dbReference type="Rhea" id="RHEA-COMP:17342"/>
        <dbReference type="ChEBI" id="CHEBI:33019"/>
        <dbReference type="ChEBI" id="CHEBI:61557"/>
        <dbReference type="ChEBI" id="CHEBI:140395"/>
        <dbReference type="EC" id="2.7.7.6"/>
    </reaction>
</comment>
<comment type="cofactor">
    <cofactor evidence="1">
        <name>Zn(2+)</name>
        <dbReference type="ChEBI" id="CHEBI:29105"/>
    </cofactor>
    <text evidence="1">Binds 1 zinc ion.</text>
</comment>
<comment type="subunit">
    <text evidence="1">Part of the RNA polymerase complex.</text>
</comment>
<comment type="subcellular location">
    <subcellularLocation>
        <location evidence="1">Cytoplasm</location>
    </subcellularLocation>
</comment>
<comment type="similarity">
    <text evidence="1">Belongs to the archaeal Rpo10/eukaryotic RPB10 RNA polymerase subunit family.</text>
</comment>
<gene>
    <name evidence="1" type="primary">rpo10</name>
    <name evidence="1" type="synonym">rpoN</name>
    <name type="ordered locus">NP_2842A</name>
</gene>
<keyword id="KW-0963">Cytoplasm</keyword>
<keyword id="KW-0240">DNA-directed RNA polymerase</keyword>
<keyword id="KW-0479">Metal-binding</keyword>
<keyword id="KW-0548">Nucleotidyltransferase</keyword>
<keyword id="KW-1185">Reference proteome</keyword>
<keyword id="KW-0804">Transcription</keyword>
<keyword id="KW-0808">Transferase</keyword>
<keyword id="KW-0862">Zinc</keyword>
<dbReference type="EC" id="2.7.7.6" evidence="1"/>
<dbReference type="EMBL" id="CR936257">
    <property type="protein sequence ID" value="CAI49512.1"/>
    <property type="molecule type" value="Genomic_DNA"/>
</dbReference>
<dbReference type="RefSeq" id="WP_011323137.1">
    <property type="nucleotide sequence ID" value="NC_007426.1"/>
</dbReference>
<dbReference type="SMR" id="Q3IQT2"/>
<dbReference type="STRING" id="348780.NP_2842A"/>
<dbReference type="EnsemblBacteria" id="CAI49512">
    <property type="protein sequence ID" value="CAI49512"/>
    <property type="gene ID" value="NP_2842A"/>
</dbReference>
<dbReference type="GeneID" id="3703163"/>
<dbReference type="KEGG" id="nph:NP_2842A"/>
<dbReference type="eggNOG" id="arCOG04244">
    <property type="taxonomic scope" value="Archaea"/>
</dbReference>
<dbReference type="HOGENOM" id="CLU_143122_1_1_2"/>
<dbReference type="OrthoDB" id="371754at2157"/>
<dbReference type="Proteomes" id="UP000002698">
    <property type="component" value="Chromosome"/>
</dbReference>
<dbReference type="GO" id="GO:0005737">
    <property type="term" value="C:cytoplasm"/>
    <property type="evidence" value="ECO:0007669"/>
    <property type="project" value="UniProtKB-SubCell"/>
</dbReference>
<dbReference type="GO" id="GO:0000428">
    <property type="term" value="C:DNA-directed RNA polymerase complex"/>
    <property type="evidence" value="ECO:0007669"/>
    <property type="project" value="UniProtKB-KW"/>
</dbReference>
<dbReference type="GO" id="GO:0003677">
    <property type="term" value="F:DNA binding"/>
    <property type="evidence" value="ECO:0007669"/>
    <property type="project" value="InterPro"/>
</dbReference>
<dbReference type="GO" id="GO:0003899">
    <property type="term" value="F:DNA-directed RNA polymerase activity"/>
    <property type="evidence" value="ECO:0007669"/>
    <property type="project" value="UniProtKB-UniRule"/>
</dbReference>
<dbReference type="GO" id="GO:0008270">
    <property type="term" value="F:zinc ion binding"/>
    <property type="evidence" value="ECO:0007669"/>
    <property type="project" value="UniProtKB-UniRule"/>
</dbReference>
<dbReference type="GO" id="GO:0006351">
    <property type="term" value="P:DNA-templated transcription"/>
    <property type="evidence" value="ECO:0007669"/>
    <property type="project" value="UniProtKB-UniRule"/>
</dbReference>
<dbReference type="FunFam" id="1.10.10.60:FF:000335">
    <property type="entry name" value="DNA-directed RNA polymerase subunit N, putative"/>
    <property type="match status" value="1"/>
</dbReference>
<dbReference type="Gene3D" id="1.10.10.60">
    <property type="entry name" value="Homeodomain-like"/>
    <property type="match status" value="1"/>
</dbReference>
<dbReference type="HAMAP" id="MF_00250">
    <property type="entry name" value="RNApol_arch_Rpo10"/>
    <property type="match status" value="1"/>
</dbReference>
<dbReference type="InterPro" id="IPR023580">
    <property type="entry name" value="RNA_pol_su_RPB10"/>
</dbReference>
<dbReference type="InterPro" id="IPR020789">
    <property type="entry name" value="RNA_pol_suN_Zn-BS"/>
</dbReference>
<dbReference type="InterPro" id="IPR000268">
    <property type="entry name" value="RPABC5/Rpb10"/>
</dbReference>
<dbReference type="NCBIfam" id="NF003089">
    <property type="entry name" value="PRK04016.1"/>
    <property type="match status" value="1"/>
</dbReference>
<dbReference type="PANTHER" id="PTHR23431:SF3">
    <property type="entry name" value="DNA-DIRECTED RNA POLYMERASES I, II, AND III SUBUNIT RPABC5"/>
    <property type="match status" value="1"/>
</dbReference>
<dbReference type="PANTHER" id="PTHR23431">
    <property type="entry name" value="DNA-DIRECTED RNA POLYMERASES I, II, AND III SUBUNIT RPABC5 FAMILY MEMBER"/>
    <property type="match status" value="1"/>
</dbReference>
<dbReference type="Pfam" id="PF01194">
    <property type="entry name" value="RNA_pol_N"/>
    <property type="match status" value="1"/>
</dbReference>
<dbReference type="PIRSF" id="PIRSF005653">
    <property type="entry name" value="RNA_pol_N/8_sub"/>
    <property type="match status" value="1"/>
</dbReference>
<dbReference type="SUPFAM" id="SSF46924">
    <property type="entry name" value="RNA polymerase subunit RPB10"/>
    <property type="match status" value="1"/>
</dbReference>
<dbReference type="PROSITE" id="PS01112">
    <property type="entry name" value="RNA_POL_N_8KD"/>
    <property type="match status" value="1"/>
</dbReference>
<sequence>MMVPVRCFTCGTVVGEHWGEFKERAREGDEDPAEVLDELGVERACCRRMLVSHKDLVDIVSPYQ</sequence>
<feature type="chain" id="PRO_0000304197" description="DNA-directed RNA polymerase subunit Rpo10">
    <location>
        <begin position="1"/>
        <end position="64"/>
    </location>
</feature>
<feature type="binding site" evidence="1">
    <location>
        <position position="7"/>
    </location>
    <ligand>
        <name>Zn(2+)</name>
        <dbReference type="ChEBI" id="CHEBI:29105"/>
    </ligand>
</feature>
<feature type="binding site" evidence="1">
    <location>
        <position position="10"/>
    </location>
    <ligand>
        <name>Zn(2+)</name>
        <dbReference type="ChEBI" id="CHEBI:29105"/>
    </ligand>
</feature>
<feature type="binding site" evidence="1">
    <location>
        <position position="45"/>
    </location>
    <ligand>
        <name>Zn(2+)</name>
        <dbReference type="ChEBI" id="CHEBI:29105"/>
    </ligand>
</feature>
<feature type="binding site" evidence="1">
    <location>
        <position position="46"/>
    </location>
    <ligand>
        <name>Zn(2+)</name>
        <dbReference type="ChEBI" id="CHEBI:29105"/>
    </ligand>
</feature>
<protein>
    <recommendedName>
        <fullName evidence="1">DNA-directed RNA polymerase subunit Rpo10</fullName>
        <ecNumber evidence="1">2.7.7.6</ecNumber>
    </recommendedName>
    <alternativeName>
        <fullName evidence="1">DNA-directed RNA polymerase subunit N</fullName>
    </alternativeName>
</protein>
<name>RPO10_NATPD</name>
<organism>
    <name type="scientific">Natronomonas pharaonis (strain ATCC 35678 / DSM 2160 / CIP 103997 / JCM 8858 / NBRC 14720 / NCIMB 2260 / Gabara)</name>
    <name type="common">Halobacterium pharaonis</name>
    <dbReference type="NCBI Taxonomy" id="348780"/>
    <lineage>
        <taxon>Archaea</taxon>
        <taxon>Methanobacteriati</taxon>
        <taxon>Methanobacteriota</taxon>
        <taxon>Stenosarchaea group</taxon>
        <taxon>Halobacteria</taxon>
        <taxon>Halobacteriales</taxon>
        <taxon>Haloarculaceae</taxon>
        <taxon>Natronomonas</taxon>
    </lineage>
</organism>
<accession>Q3IQT2</accession>